<protein>
    <recommendedName>
        <fullName evidence="1">Uracil phosphoribosyltransferase</fullName>
        <ecNumber evidence="1">2.4.2.9</ecNumber>
    </recommendedName>
    <alternativeName>
        <fullName evidence="1">UMP pyrophosphorylase</fullName>
    </alternativeName>
    <alternativeName>
        <fullName evidence="1">UPRTase</fullName>
    </alternativeName>
</protein>
<accession>P67395</accession>
<accession>P58999</accession>
<accession>Q99SE6</accession>
<evidence type="ECO:0000255" key="1">
    <source>
        <dbReference type="HAMAP-Rule" id="MF_01218"/>
    </source>
</evidence>
<proteinExistence type="inferred from homology"/>
<organism>
    <name type="scientific">Staphylococcus aureus (strain Mu50 / ATCC 700699)</name>
    <dbReference type="NCBI Taxonomy" id="158878"/>
    <lineage>
        <taxon>Bacteria</taxon>
        <taxon>Bacillati</taxon>
        <taxon>Bacillota</taxon>
        <taxon>Bacilli</taxon>
        <taxon>Bacillales</taxon>
        <taxon>Staphylococcaceae</taxon>
        <taxon>Staphylococcus</taxon>
    </lineage>
</organism>
<comment type="function">
    <text evidence="1">Catalyzes the conversion of uracil and 5-phospho-alpha-D-ribose 1-diphosphate (PRPP) to UMP and diphosphate.</text>
</comment>
<comment type="catalytic activity">
    <reaction evidence="1">
        <text>UMP + diphosphate = 5-phospho-alpha-D-ribose 1-diphosphate + uracil</text>
        <dbReference type="Rhea" id="RHEA:13017"/>
        <dbReference type="ChEBI" id="CHEBI:17568"/>
        <dbReference type="ChEBI" id="CHEBI:33019"/>
        <dbReference type="ChEBI" id="CHEBI:57865"/>
        <dbReference type="ChEBI" id="CHEBI:58017"/>
        <dbReference type="EC" id="2.4.2.9"/>
    </reaction>
</comment>
<comment type="cofactor">
    <cofactor evidence="1">
        <name>Mg(2+)</name>
        <dbReference type="ChEBI" id="CHEBI:18420"/>
    </cofactor>
    <text evidence="1">Binds 1 Mg(2+) ion per subunit. The magnesium is bound as Mg-PRPP.</text>
</comment>
<comment type="activity regulation">
    <text evidence="1">Allosterically activated by GTP.</text>
</comment>
<comment type="pathway">
    <text evidence="1">Pyrimidine metabolism; UMP biosynthesis via salvage pathway; UMP from uracil: step 1/1.</text>
</comment>
<comment type="similarity">
    <text evidence="1">Belongs to the UPRTase family.</text>
</comment>
<sequence length="209" mass="23050">MSKVHVFDHPLIQHKLSYIRDVNTGTKEFRELVDEVGMLMAYEVTRDLELQDVDIETPVTKMTAKRLAGKKLAIVPILRAGLGMTDGILSLVPAARVGHIGLYRDPETLKAVEYFAKLPQDITERQIIVVDPMLATGASAIEAITSLKKRGAKNIRFMCLIAAPEGVEKMHEAHPDVDIYIAALDEKLNDKAYITPGLGDAGDRLFGTK</sequence>
<keyword id="KW-0021">Allosteric enzyme</keyword>
<keyword id="KW-0328">Glycosyltransferase</keyword>
<keyword id="KW-0342">GTP-binding</keyword>
<keyword id="KW-0460">Magnesium</keyword>
<keyword id="KW-0547">Nucleotide-binding</keyword>
<keyword id="KW-0808">Transferase</keyword>
<feature type="chain" id="PRO_0000120880" description="Uracil phosphoribosyltransferase">
    <location>
        <begin position="1"/>
        <end position="209"/>
    </location>
</feature>
<feature type="binding site" evidence="1">
    <location>
        <position position="79"/>
    </location>
    <ligand>
        <name>5-phospho-alpha-D-ribose 1-diphosphate</name>
        <dbReference type="ChEBI" id="CHEBI:58017"/>
    </ligand>
</feature>
<feature type="binding site" evidence="1">
    <location>
        <position position="104"/>
    </location>
    <ligand>
        <name>5-phospho-alpha-D-ribose 1-diphosphate</name>
        <dbReference type="ChEBI" id="CHEBI:58017"/>
    </ligand>
</feature>
<feature type="binding site" evidence="1">
    <location>
        <begin position="131"/>
        <end position="139"/>
    </location>
    <ligand>
        <name>5-phospho-alpha-D-ribose 1-diphosphate</name>
        <dbReference type="ChEBI" id="CHEBI:58017"/>
    </ligand>
</feature>
<feature type="binding site" evidence="1">
    <location>
        <position position="194"/>
    </location>
    <ligand>
        <name>uracil</name>
        <dbReference type="ChEBI" id="CHEBI:17568"/>
    </ligand>
</feature>
<feature type="binding site" evidence="1">
    <location>
        <begin position="199"/>
        <end position="201"/>
    </location>
    <ligand>
        <name>uracil</name>
        <dbReference type="ChEBI" id="CHEBI:17568"/>
    </ligand>
</feature>
<feature type="binding site" evidence="1">
    <location>
        <position position="200"/>
    </location>
    <ligand>
        <name>5-phospho-alpha-D-ribose 1-diphosphate</name>
        <dbReference type="ChEBI" id="CHEBI:58017"/>
    </ligand>
</feature>
<name>UPP_STAAM</name>
<gene>
    <name evidence="1" type="primary">upp</name>
    <name type="ordered locus">SAV2112</name>
</gene>
<dbReference type="EC" id="2.4.2.9" evidence="1"/>
<dbReference type="EMBL" id="BA000017">
    <property type="protein sequence ID" value="BAB58274.1"/>
    <property type="molecule type" value="Genomic_DNA"/>
</dbReference>
<dbReference type="RefSeq" id="WP_000048712.1">
    <property type="nucleotide sequence ID" value="NC_002758.2"/>
</dbReference>
<dbReference type="SMR" id="P67395"/>
<dbReference type="KEGG" id="sav:SAV2112"/>
<dbReference type="HOGENOM" id="CLU_067096_2_2_9"/>
<dbReference type="PhylomeDB" id="P67395"/>
<dbReference type="UniPathway" id="UPA00574">
    <property type="reaction ID" value="UER00636"/>
</dbReference>
<dbReference type="Proteomes" id="UP000002481">
    <property type="component" value="Chromosome"/>
</dbReference>
<dbReference type="GO" id="GO:0005525">
    <property type="term" value="F:GTP binding"/>
    <property type="evidence" value="ECO:0007669"/>
    <property type="project" value="UniProtKB-KW"/>
</dbReference>
<dbReference type="GO" id="GO:0000287">
    <property type="term" value="F:magnesium ion binding"/>
    <property type="evidence" value="ECO:0007669"/>
    <property type="project" value="UniProtKB-UniRule"/>
</dbReference>
<dbReference type="GO" id="GO:0004845">
    <property type="term" value="F:uracil phosphoribosyltransferase activity"/>
    <property type="evidence" value="ECO:0007669"/>
    <property type="project" value="UniProtKB-UniRule"/>
</dbReference>
<dbReference type="GO" id="GO:0044206">
    <property type="term" value="P:UMP salvage"/>
    <property type="evidence" value="ECO:0007669"/>
    <property type="project" value="UniProtKB-UniRule"/>
</dbReference>
<dbReference type="GO" id="GO:0006223">
    <property type="term" value="P:uracil salvage"/>
    <property type="evidence" value="ECO:0007669"/>
    <property type="project" value="InterPro"/>
</dbReference>
<dbReference type="CDD" id="cd06223">
    <property type="entry name" value="PRTases_typeI"/>
    <property type="match status" value="1"/>
</dbReference>
<dbReference type="FunFam" id="3.40.50.2020:FF:000003">
    <property type="entry name" value="Uracil phosphoribosyltransferase"/>
    <property type="match status" value="1"/>
</dbReference>
<dbReference type="Gene3D" id="3.40.50.2020">
    <property type="match status" value="1"/>
</dbReference>
<dbReference type="HAMAP" id="MF_01218_B">
    <property type="entry name" value="Upp_B"/>
    <property type="match status" value="1"/>
</dbReference>
<dbReference type="InterPro" id="IPR000836">
    <property type="entry name" value="PRibTrfase_dom"/>
</dbReference>
<dbReference type="InterPro" id="IPR029057">
    <property type="entry name" value="PRTase-like"/>
</dbReference>
<dbReference type="InterPro" id="IPR034332">
    <property type="entry name" value="Upp_B"/>
</dbReference>
<dbReference type="InterPro" id="IPR050054">
    <property type="entry name" value="UPRTase/APRTase"/>
</dbReference>
<dbReference type="InterPro" id="IPR005765">
    <property type="entry name" value="Ura_phspho_trans"/>
</dbReference>
<dbReference type="NCBIfam" id="NF001097">
    <property type="entry name" value="PRK00129.1"/>
    <property type="match status" value="1"/>
</dbReference>
<dbReference type="NCBIfam" id="TIGR01091">
    <property type="entry name" value="upp"/>
    <property type="match status" value="1"/>
</dbReference>
<dbReference type="PANTHER" id="PTHR32315">
    <property type="entry name" value="ADENINE PHOSPHORIBOSYLTRANSFERASE"/>
    <property type="match status" value="1"/>
</dbReference>
<dbReference type="PANTHER" id="PTHR32315:SF4">
    <property type="entry name" value="URACIL PHOSPHORIBOSYLTRANSFERASE, CHLOROPLASTIC"/>
    <property type="match status" value="1"/>
</dbReference>
<dbReference type="Pfam" id="PF14681">
    <property type="entry name" value="UPRTase"/>
    <property type="match status" value="1"/>
</dbReference>
<dbReference type="SUPFAM" id="SSF53271">
    <property type="entry name" value="PRTase-like"/>
    <property type="match status" value="1"/>
</dbReference>
<reference key="1">
    <citation type="journal article" date="2001" name="Lancet">
        <title>Whole genome sequencing of meticillin-resistant Staphylococcus aureus.</title>
        <authorList>
            <person name="Kuroda M."/>
            <person name="Ohta T."/>
            <person name="Uchiyama I."/>
            <person name="Baba T."/>
            <person name="Yuzawa H."/>
            <person name="Kobayashi I."/>
            <person name="Cui L."/>
            <person name="Oguchi A."/>
            <person name="Aoki K."/>
            <person name="Nagai Y."/>
            <person name="Lian J.-Q."/>
            <person name="Ito T."/>
            <person name="Kanamori M."/>
            <person name="Matsumaru H."/>
            <person name="Maruyama A."/>
            <person name="Murakami H."/>
            <person name="Hosoyama A."/>
            <person name="Mizutani-Ui Y."/>
            <person name="Takahashi N.K."/>
            <person name="Sawano T."/>
            <person name="Inoue R."/>
            <person name="Kaito C."/>
            <person name="Sekimizu K."/>
            <person name="Hirakawa H."/>
            <person name="Kuhara S."/>
            <person name="Goto S."/>
            <person name="Yabuzaki J."/>
            <person name="Kanehisa M."/>
            <person name="Yamashita A."/>
            <person name="Oshima K."/>
            <person name="Furuya K."/>
            <person name="Yoshino C."/>
            <person name="Shiba T."/>
            <person name="Hattori M."/>
            <person name="Ogasawara N."/>
            <person name="Hayashi H."/>
            <person name="Hiramatsu K."/>
        </authorList>
    </citation>
    <scope>NUCLEOTIDE SEQUENCE [LARGE SCALE GENOMIC DNA]</scope>
    <source>
        <strain>Mu50 / ATCC 700699</strain>
    </source>
</reference>